<name>O7A40_MOUSE</name>
<gene>
    <name evidence="4" type="primary">Or7a40</name>
    <name evidence="4" type="synonym">Mor140-1</name>
    <name evidence="4" type="synonym">Olfr19</name>
</gene>
<feature type="chain" id="PRO_0000150814" description="Olfactory receptor 7A40">
    <location>
        <begin position="1"/>
        <end position="309"/>
    </location>
</feature>
<feature type="topological domain" description="Extracellular" evidence="1">
    <location>
        <begin position="1"/>
        <end position="26"/>
    </location>
</feature>
<feature type="transmembrane region" description="Helical; Name=1" evidence="1">
    <location>
        <begin position="27"/>
        <end position="47"/>
    </location>
</feature>
<feature type="topological domain" description="Cytoplasmic" evidence="1">
    <location>
        <begin position="48"/>
        <end position="57"/>
    </location>
</feature>
<feature type="transmembrane region" description="Helical; Name=2" evidence="1">
    <location>
        <begin position="58"/>
        <end position="78"/>
    </location>
</feature>
<feature type="topological domain" description="Extracellular" evidence="1">
    <location>
        <begin position="79"/>
        <end position="97"/>
    </location>
</feature>
<feature type="transmembrane region" description="Helical; Name=3" evidence="1">
    <location>
        <begin position="98"/>
        <end position="118"/>
    </location>
</feature>
<feature type="topological domain" description="Cytoplasmic" evidence="1">
    <location>
        <begin position="119"/>
        <end position="139"/>
    </location>
</feature>
<feature type="transmembrane region" description="Helical; Name=4" evidence="1">
    <location>
        <begin position="140"/>
        <end position="160"/>
    </location>
</feature>
<feature type="topological domain" description="Extracellular" evidence="1">
    <location>
        <begin position="161"/>
        <end position="196"/>
    </location>
</feature>
<feature type="transmembrane region" description="Helical; Name=5" evidence="1">
    <location>
        <begin position="197"/>
        <end position="217"/>
    </location>
</feature>
<feature type="topological domain" description="Cytoplasmic" evidence="1">
    <location>
        <begin position="218"/>
        <end position="244"/>
    </location>
</feature>
<feature type="transmembrane region" description="Helical; Name=6" evidence="1">
    <location>
        <begin position="245"/>
        <end position="265"/>
    </location>
</feature>
<feature type="topological domain" description="Extracellular" evidence="1">
    <location>
        <begin position="266"/>
        <end position="269"/>
    </location>
</feature>
<feature type="transmembrane region" description="Helical; Name=7" evidence="1">
    <location>
        <begin position="270"/>
        <end position="292"/>
    </location>
</feature>
<feature type="topological domain" description="Cytoplasmic" evidence="1">
    <location>
        <begin position="293"/>
        <end position="309"/>
    </location>
</feature>
<feature type="glycosylation site" description="N-linked (GlcNAc...) asparagine" evidence="1">
    <location>
        <position position="5"/>
    </location>
</feature>
<feature type="disulfide bond" evidence="2">
    <location>
        <begin position="97"/>
        <end position="179"/>
    </location>
</feature>
<feature type="sequence conflict" description="In Ref. 5; AAD43419." evidence="3" ref="5">
    <original>C</original>
    <variation>R</variation>
    <location>
        <position position="138"/>
    </location>
</feature>
<feature type="sequence conflict" description="In Ref. 5; AAD43419." evidence="3" ref="5">
    <original>F</original>
    <variation>S</variation>
    <location>
        <position position="238"/>
    </location>
</feature>
<feature type="sequence conflict" description="In Ref. 5; AAD43419." evidence="3" ref="5">
    <original>V</original>
    <variation>A</variation>
    <location>
        <position position="258"/>
    </location>
</feature>
<protein>
    <recommendedName>
        <fullName evidence="3">Olfactory receptor 7A40</fullName>
    </recommendedName>
    <alternativeName>
        <fullName>Odorant receptor M12</fullName>
    </alternativeName>
    <alternativeName>
        <fullName>Olfactory receptor 140-1</fullName>
    </alternativeName>
    <alternativeName>
        <fullName>Olfactory receptor 19</fullName>
    </alternativeName>
</protein>
<keyword id="KW-1003">Cell membrane</keyword>
<keyword id="KW-1015">Disulfide bond</keyword>
<keyword id="KW-0297">G-protein coupled receptor</keyword>
<keyword id="KW-0325">Glycoprotein</keyword>
<keyword id="KW-0472">Membrane</keyword>
<keyword id="KW-0552">Olfaction</keyword>
<keyword id="KW-0675">Receptor</keyword>
<keyword id="KW-1185">Reference proteome</keyword>
<keyword id="KW-0716">Sensory transduction</keyword>
<keyword id="KW-0807">Transducer</keyword>
<keyword id="KW-0812">Transmembrane</keyword>
<keyword id="KW-1133">Transmembrane helix</keyword>
<dbReference type="EMBL" id="AY073758">
    <property type="protein sequence ID" value="AAL61421.1"/>
    <property type="molecule type" value="Genomic_DNA"/>
</dbReference>
<dbReference type="EMBL" id="AY317246">
    <property type="protein sequence ID" value="AAP70757.1"/>
    <property type="molecule type" value="Genomic_DNA"/>
</dbReference>
<dbReference type="EMBL" id="AF283558">
    <property type="protein sequence ID" value="AAF91473.1"/>
    <property type="molecule type" value="Genomic_DNA"/>
</dbReference>
<dbReference type="EMBL" id="AF073970">
    <property type="protein sequence ID" value="AAD43419.1"/>
    <property type="molecule type" value="Genomic_DNA"/>
</dbReference>
<dbReference type="CCDS" id="CCDS27987.1"/>
<dbReference type="RefSeq" id="NP_666447.1">
    <property type="nucleotide sequence ID" value="NM_146335.1"/>
</dbReference>
<dbReference type="SMR" id="Q9JHB2"/>
<dbReference type="FunCoup" id="Q9JHB2">
    <property type="interactions" value="1174"/>
</dbReference>
<dbReference type="STRING" id="10090.ENSMUSP00000145655"/>
<dbReference type="GlyCosmos" id="Q9JHB2">
    <property type="glycosylation" value="1 site, No reported glycans"/>
</dbReference>
<dbReference type="GlyGen" id="Q9JHB2">
    <property type="glycosylation" value="1 site"/>
</dbReference>
<dbReference type="PaxDb" id="10090-ENSMUSP00000053393"/>
<dbReference type="DNASU" id="18316"/>
<dbReference type="Ensembl" id="ENSMUST00000057886.6">
    <property type="protein sequence ID" value="ENSMUSP00000053393.5"/>
    <property type="gene ID" value="ENSMUSG00000048101.7"/>
</dbReference>
<dbReference type="Ensembl" id="ENSMUST00000206365.3">
    <property type="protein sequence ID" value="ENSMUSP00000145655.3"/>
    <property type="gene ID" value="ENSMUSG00000048101.7"/>
</dbReference>
<dbReference type="GeneID" id="18316"/>
<dbReference type="KEGG" id="mmu:18316"/>
<dbReference type="UCSC" id="uc007yiz.1">
    <property type="organism name" value="mouse"/>
</dbReference>
<dbReference type="AGR" id="MGI:109316"/>
<dbReference type="CTD" id="18316"/>
<dbReference type="MGI" id="MGI:109316">
    <property type="gene designation" value="Or7a40"/>
</dbReference>
<dbReference type="VEuPathDB" id="HostDB:ENSMUSG00000048101"/>
<dbReference type="eggNOG" id="ENOG502RTYS">
    <property type="taxonomic scope" value="Eukaryota"/>
</dbReference>
<dbReference type="GeneTree" id="ENSGT00940000153523"/>
<dbReference type="HOGENOM" id="CLU_012526_1_3_1"/>
<dbReference type="InParanoid" id="Q9JHB2"/>
<dbReference type="OMA" id="GCWITSA"/>
<dbReference type="OrthoDB" id="9444602at2759"/>
<dbReference type="PhylomeDB" id="Q9JHB2"/>
<dbReference type="TreeFam" id="TF337210"/>
<dbReference type="BioGRID-ORCS" id="18316">
    <property type="hits" value="2 hits in 71 CRISPR screens"/>
</dbReference>
<dbReference type="PRO" id="PR:Q9JHB2"/>
<dbReference type="Proteomes" id="UP000000589">
    <property type="component" value="Chromosome 16"/>
</dbReference>
<dbReference type="RNAct" id="Q9JHB2">
    <property type="molecule type" value="protein"/>
</dbReference>
<dbReference type="Bgee" id="ENSMUSG00000048101">
    <property type="expression patterns" value="Expressed in respiratory tract epithelium and 6 other cell types or tissues"/>
</dbReference>
<dbReference type="ExpressionAtlas" id="Q9JHB2">
    <property type="expression patterns" value="baseline and differential"/>
</dbReference>
<dbReference type="GO" id="GO:0005789">
    <property type="term" value="C:endoplasmic reticulum membrane"/>
    <property type="evidence" value="ECO:0000304"/>
    <property type="project" value="Reactome"/>
</dbReference>
<dbReference type="GO" id="GO:0016020">
    <property type="term" value="C:membrane"/>
    <property type="evidence" value="ECO:0000247"/>
    <property type="project" value="MGI"/>
</dbReference>
<dbReference type="GO" id="GO:0005886">
    <property type="term" value="C:plasma membrane"/>
    <property type="evidence" value="ECO:0000304"/>
    <property type="project" value="Reactome"/>
</dbReference>
<dbReference type="GO" id="GO:0004930">
    <property type="term" value="F:G protein-coupled receptor activity"/>
    <property type="evidence" value="ECO:0007669"/>
    <property type="project" value="UniProtKB-KW"/>
</dbReference>
<dbReference type="GO" id="GO:0004984">
    <property type="term" value="F:olfactory receptor activity"/>
    <property type="evidence" value="ECO:0000247"/>
    <property type="project" value="MGI"/>
</dbReference>
<dbReference type="GO" id="GO:0007186">
    <property type="term" value="P:G protein-coupled receptor signaling pathway"/>
    <property type="evidence" value="ECO:0000247"/>
    <property type="project" value="MGI"/>
</dbReference>
<dbReference type="GO" id="GO:0007608">
    <property type="term" value="P:sensory perception of smell"/>
    <property type="evidence" value="ECO:0000247"/>
    <property type="project" value="MGI"/>
</dbReference>
<dbReference type="CDD" id="cd15234">
    <property type="entry name" value="7tmA_OR7-like"/>
    <property type="match status" value="1"/>
</dbReference>
<dbReference type="FunFam" id="1.20.1070.10:FF:000009">
    <property type="entry name" value="Olfactory receptor"/>
    <property type="match status" value="1"/>
</dbReference>
<dbReference type="Gene3D" id="1.20.1070.10">
    <property type="entry name" value="Rhodopsin 7-helix transmembrane proteins"/>
    <property type="match status" value="1"/>
</dbReference>
<dbReference type="InterPro" id="IPR000276">
    <property type="entry name" value="GPCR_Rhodpsn"/>
</dbReference>
<dbReference type="InterPro" id="IPR017452">
    <property type="entry name" value="GPCR_Rhodpsn_7TM"/>
</dbReference>
<dbReference type="InterPro" id="IPR000725">
    <property type="entry name" value="Olfact_rcpt"/>
</dbReference>
<dbReference type="PANTHER" id="PTHR48001">
    <property type="entry name" value="OLFACTORY RECEPTOR"/>
    <property type="match status" value="1"/>
</dbReference>
<dbReference type="Pfam" id="PF13853">
    <property type="entry name" value="7tm_4"/>
    <property type="match status" value="1"/>
</dbReference>
<dbReference type="PRINTS" id="PR00237">
    <property type="entry name" value="GPCRRHODOPSN"/>
</dbReference>
<dbReference type="PRINTS" id="PR00245">
    <property type="entry name" value="OLFACTORYR"/>
</dbReference>
<dbReference type="SUPFAM" id="SSF81321">
    <property type="entry name" value="Family A G protein-coupled receptor-like"/>
    <property type="match status" value="1"/>
</dbReference>
<dbReference type="PROSITE" id="PS00237">
    <property type="entry name" value="G_PROTEIN_RECEP_F1_1"/>
    <property type="match status" value="1"/>
</dbReference>
<dbReference type="PROSITE" id="PS50262">
    <property type="entry name" value="G_PROTEIN_RECEP_F1_2"/>
    <property type="match status" value="1"/>
</dbReference>
<proteinExistence type="inferred from homology"/>
<reference key="1">
    <citation type="journal article" date="2002" name="Nat. Neurosci.">
        <title>The olfactory receptor gene superfamily of the mouse.</title>
        <authorList>
            <person name="Zhang X."/>
            <person name="Firestein S."/>
        </authorList>
    </citation>
    <scope>NUCLEOTIDE SEQUENCE [GENOMIC DNA]</scope>
</reference>
<reference key="2">
    <citation type="journal article" date="2002" name="Hum. Mol. Genet.">
        <title>Different evolutionary processes shaped the mouse and human olfactory receptor gene families.</title>
        <authorList>
            <person name="Young J.M."/>
            <person name="Friedman C."/>
            <person name="Williams E.M."/>
            <person name="Ross J.A."/>
            <person name="Tonnes-Priddy L."/>
            <person name="Trask B.J."/>
        </authorList>
    </citation>
    <scope>NUCLEOTIDE SEQUENCE [GENOMIC DNA]</scope>
</reference>
<reference key="3">
    <citation type="journal article" date="2002" name="Hum. Mol. Genet.">
        <authorList>
            <person name="Young J.M."/>
            <person name="Friedman C."/>
            <person name="Williams E.M."/>
            <person name="Ross J.A."/>
            <person name="Tonnes-Priddy L."/>
            <person name="Trask B.J."/>
        </authorList>
    </citation>
    <scope>ERRATUM OF PUBMED:11875048</scope>
</reference>
<reference key="4">
    <citation type="submission" date="2000-06" db="EMBL/GenBank/DDBJ databases">
        <authorList>
            <person name="Feinstein P."/>
            <person name="Mombaerts P."/>
        </authorList>
    </citation>
    <scope>NUCLEOTIDE SEQUENCE [GENOMIC DNA]</scope>
    <source>
        <strain>129/SvJ</strain>
    </source>
</reference>
<reference key="5">
    <citation type="journal article" date="2000" name="Proc. Natl. Acad. Sci. U.S.A.">
        <title>The olfactory receptor gene repertoire in primates and mouse: evidence for reduction of the functional fraction in primates.</title>
        <authorList>
            <person name="Rouquier S."/>
            <person name="Blancher A."/>
            <person name="Giorgi D."/>
        </authorList>
    </citation>
    <scope>NUCLEOTIDE SEQUENCE [GENOMIC DNA] OF 68-283</scope>
</reference>
<accession>Q9JHB2</accession>
<accession>Q9JM32</accession>
<comment type="function">
    <text evidence="3">Odorant receptor.</text>
</comment>
<comment type="subcellular location">
    <subcellularLocation>
        <location evidence="3">Cell membrane</location>
        <topology evidence="1">Multi-pass membrane protein</topology>
    </subcellularLocation>
</comment>
<comment type="similarity">
    <text evidence="2">Belongs to the G-protein coupled receptor 1 family.</text>
</comment>
<organism>
    <name type="scientific">Mus musculus</name>
    <name type="common">Mouse</name>
    <dbReference type="NCBI Taxonomy" id="10090"/>
    <lineage>
        <taxon>Eukaryota</taxon>
        <taxon>Metazoa</taxon>
        <taxon>Chordata</taxon>
        <taxon>Craniata</taxon>
        <taxon>Vertebrata</taxon>
        <taxon>Euteleostomi</taxon>
        <taxon>Mammalia</taxon>
        <taxon>Eutheria</taxon>
        <taxon>Euarchontoglires</taxon>
        <taxon>Glires</taxon>
        <taxon>Rodentia</taxon>
        <taxon>Myomorpha</taxon>
        <taxon>Muroidea</taxon>
        <taxon>Muridae</taxon>
        <taxon>Murinae</taxon>
        <taxon>Mus</taxon>
        <taxon>Mus</taxon>
    </lineage>
</organism>
<evidence type="ECO:0000255" key="1"/>
<evidence type="ECO:0000255" key="2">
    <source>
        <dbReference type="PROSITE-ProRule" id="PRU00521"/>
    </source>
</evidence>
<evidence type="ECO:0000305" key="3"/>
<evidence type="ECO:0000312" key="4">
    <source>
        <dbReference type="MGI" id="MGI:109316"/>
    </source>
</evidence>
<sequence>MELKNDTQISKFILLGISEDPLWQPFLFGLFLFMYLVTLLGNLLIIIATITDSHLHTPMYFFLSNLSFADICFTSASIPKMLVNIQTKNKVITYEGCISQVFFFILFGVLDNFLLAVMAYDRYVAICHPLHYMVIMNCRLCGFLVLGSWVTTALNSLLQSSMALRLSFCTDLKIPHFVCELNQLVLLACNDTFPNDMVMYFAAILLGGGPLAGILYSYSKIVSSIRAISSSQGKYKAFSTCASHLSVVSLFYSTLLGVYLSSSFTQNSHSTARASVMYSVVTPMLNPFIYSLRNKDLMGALRRLLRRKS</sequence>